<comment type="function">
    <text evidence="7">Acts as a guanine nucleotide exchange factor (GEF) for RhoA and RhoB GTPases.</text>
</comment>
<comment type="subunit">
    <text>Interacts with RHOA and RHOB.</text>
</comment>
<comment type="interaction">
    <interactant intactId="EBI-10312733">
        <id>Q9NR81</id>
    </interactant>
    <interactant intactId="EBI-739624">
        <id>Q8NHQ1</id>
        <label>CEP70</label>
    </interactant>
    <organismsDiffer>false</organismsDiffer>
    <experiments>7</experiments>
</comment>
<comment type="interaction">
    <interactant intactId="EBI-10312733">
        <id>Q9NR81</id>
    </interactant>
    <interactant intactId="EBI-742054">
        <id>Q96D03</id>
        <label>DDIT4L</label>
    </interactant>
    <organismsDiffer>false</organismsDiffer>
    <experiments>3</experiments>
</comment>
<comment type="interaction">
    <interactant intactId="EBI-10312733">
        <id>Q9NR81</id>
    </interactant>
    <interactant intactId="EBI-7116203">
        <id>O75031</id>
        <label>HSF2BP</label>
    </interactant>
    <organismsDiffer>false</organismsDiffer>
    <experiments>3</experiments>
</comment>
<comment type="interaction">
    <interactant intactId="EBI-10312733">
        <id>Q9NR81</id>
    </interactant>
    <interactant intactId="EBI-10302990">
        <id>Q9BYU1</id>
        <label>PBX4</label>
    </interactant>
    <organismsDiffer>false</organismsDiffer>
    <experiments>3</experiments>
</comment>
<comment type="interaction">
    <interactant intactId="EBI-10312733">
        <id>Q9NR81</id>
    </interactant>
    <interactant intactId="EBI-79165">
        <id>Q9NRD5</id>
        <label>PICK1</label>
    </interactant>
    <organismsDiffer>false</organismsDiffer>
    <experiments>3</experiments>
</comment>
<comment type="interaction">
    <interactant intactId="EBI-10312733">
        <id>Q9NR81</id>
    </interactant>
    <interactant intactId="EBI-711018">
        <id>P54274-2</id>
        <label>TERF1</label>
    </interactant>
    <organismsDiffer>false</organismsDiffer>
    <experiments>3</experiments>
</comment>
<comment type="interaction">
    <interactant intactId="EBI-10312733">
        <id>Q9NR81</id>
    </interactant>
    <interactant intactId="EBI-740098">
        <id>P36406</id>
        <label>TRIM23</label>
    </interactant>
    <organismsDiffer>false</organismsDiffer>
    <experiments>5</experiments>
</comment>
<comment type="interaction">
    <interactant intactId="EBI-10312733">
        <id>Q9NR81</id>
    </interactant>
    <interactant intactId="EBI-719493">
        <id>P14373</id>
        <label>TRIM27</label>
    </interactant>
    <organismsDiffer>false</organismsDiffer>
    <experiments>8</experiments>
</comment>
<comment type="subcellular location">
    <subcellularLocation>
        <location evidence="1">Cytoplasm</location>
    </subcellularLocation>
</comment>
<comment type="alternative products">
    <event type="alternative splicing"/>
    <isoform>
        <id>Q9NR81-1</id>
        <name>1</name>
        <sequence type="displayed"/>
    </isoform>
    <isoform>
        <id>Q9NR81-2</id>
        <name>2</name>
        <sequence type="described" ref="VSP_011612"/>
    </isoform>
    <isoform>
        <id>Q9NR81-3</id>
        <name>3</name>
        <sequence type="described" ref="VSP_027205"/>
    </isoform>
    <isoform>
        <id>Q9NR81-4</id>
        <name>4</name>
        <sequence type="described" ref="VSP_027204 VSP_027206"/>
    </isoform>
</comment>
<comment type="tissue specificity">
    <text evidence="6 7">Widely expressed. Highest levels are found in adult brain and skeletal muscle. Lower levels are found in heart and kidney.</text>
</comment>
<comment type="sequence caution" evidence="15">
    <conflict type="erroneous initiation">
        <sequence resource="EMBL-CDS" id="AAH68513"/>
    </conflict>
</comment>
<comment type="sequence caution" evidence="15">
    <conflict type="erroneous initiation">
        <sequence resource="EMBL-CDS" id="BAB14891"/>
    </conflict>
</comment>
<comment type="sequence caution" evidence="15">
    <conflict type="erroneous initiation">
        <sequence resource="EMBL-CDS" id="BAD92898"/>
    </conflict>
</comment>
<sequence>MVAKDYPFYLTVKRANCSLELPPASGPAKDAEEPSNKRVKPLSRVTSLANLIPPVKATPLKRFSQTLQRSISFRSESRPDILAPRPWSRNAAPSSTKRRDSKLWSETFDVCVNQMLTSKEIKRQEAIFELSQGEEDLIEDLKLAKKAYHDPMLKLSIMTEQELNQIFGTLDSLIPLHEELLSQLRDVRKPDGSTEHVGPILVGWLPCLSSYDSYCSNQVAAKALLDHKKQDHRVQDFLQRCLESPFSRKLDLWNFLDIPRSRLVKYPLLLREILRHTPNDNPDQQHLEEAINIIQGIVAEINTKTGESECRYYKERLLYLEEGQKDSLIDSSRVLCCHGELKNNRGVKLHVFLFQEVLVITRAVTHNEQLCYQLYRQPIPVKDLLLEDLQDGEVRLGGSLRGAFSNNERIKNFFRVSFKNGSQSQTHSLQANDTFNKQQWLNCIRQAKETVLCAAGQAGVLDSEGSFLNPTTGSRELQGETKLEQMDQSDSESDCSMDTSEVSLDCERMEQTDSSCGNSRHGESNV</sequence>
<gene>
    <name type="primary">ARHGEF3</name>
</gene>
<dbReference type="EMBL" id="AF249744">
    <property type="protein sequence ID" value="AAF79954.1"/>
    <property type="molecule type" value="mRNA"/>
</dbReference>
<dbReference type="EMBL" id="AL136832">
    <property type="protein sequence ID" value="CAB66766.1"/>
    <property type="molecule type" value="mRNA"/>
</dbReference>
<dbReference type="EMBL" id="AF433662">
    <property type="protein sequence ID" value="AAP97313.1"/>
    <property type="molecule type" value="mRNA"/>
</dbReference>
<dbReference type="EMBL" id="AK024340">
    <property type="protein sequence ID" value="BAB14891.1"/>
    <property type="status" value="ALT_INIT"/>
    <property type="molecule type" value="mRNA"/>
</dbReference>
<dbReference type="EMBL" id="AK291412">
    <property type="protein sequence ID" value="BAF84101.1"/>
    <property type="molecule type" value="mRNA"/>
</dbReference>
<dbReference type="EMBL" id="AB209661">
    <property type="protein sequence ID" value="BAD92898.1"/>
    <property type="status" value="ALT_INIT"/>
    <property type="molecule type" value="mRNA"/>
</dbReference>
<dbReference type="EMBL" id="CH471055">
    <property type="protein sequence ID" value="EAW65326.1"/>
    <property type="molecule type" value="Genomic_DNA"/>
</dbReference>
<dbReference type="EMBL" id="BC054345">
    <property type="protein sequence ID" value="AAH54345.2"/>
    <property type="molecule type" value="mRNA"/>
</dbReference>
<dbReference type="EMBL" id="BC068513">
    <property type="protein sequence ID" value="AAH68513.1"/>
    <property type="status" value="ALT_INIT"/>
    <property type="molecule type" value="mRNA"/>
</dbReference>
<dbReference type="EMBL" id="BC098122">
    <property type="protein sequence ID" value="AAH98122.2"/>
    <property type="molecule type" value="mRNA"/>
</dbReference>
<dbReference type="EMBL" id="BC098272">
    <property type="protein sequence ID" value="AAH98272.2"/>
    <property type="molecule type" value="mRNA"/>
</dbReference>
<dbReference type="EMBL" id="BC099715">
    <property type="protein sequence ID" value="AAH99715.1"/>
    <property type="molecule type" value="mRNA"/>
</dbReference>
<dbReference type="EMBL" id="BC104723">
    <property type="protein sequence ID" value="AAI04724.2"/>
    <property type="molecule type" value="mRNA"/>
</dbReference>
<dbReference type="CCDS" id="CCDS2878.1">
    <molecule id="Q9NR81-1"/>
</dbReference>
<dbReference type="CCDS" id="CCDS46854.1">
    <molecule id="Q9NR81-2"/>
</dbReference>
<dbReference type="CCDS" id="CCDS46855.1">
    <molecule id="Q9NR81-3"/>
</dbReference>
<dbReference type="RefSeq" id="NP_001122087.1">
    <molecule id="Q9NR81-2"/>
    <property type="nucleotide sequence ID" value="NM_001128615.2"/>
</dbReference>
<dbReference type="RefSeq" id="NP_001122088.1">
    <molecule id="Q9NR81-3"/>
    <property type="nucleotide sequence ID" value="NM_001128616.2"/>
</dbReference>
<dbReference type="RefSeq" id="NP_001276627.1">
    <property type="nucleotide sequence ID" value="NM_001289698.1"/>
</dbReference>
<dbReference type="RefSeq" id="NP_001364336.1">
    <molecule id="Q9NR81-2"/>
    <property type="nucleotide sequence ID" value="NM_001377407.1"/>
</dbReference>
<dbReference type="RefSeq" id="NP_062455.1">
    <molecule id="Q9NR81-1"/>
    <property type="nucleotide sequence ID" value="NM_019555.3"/>
</dbReference>
<dbReference type="RefSeq" id="XP_005265243.1">
    <property type="nucleotide sequence ID" value="XM_005265186.4"/>
</dbReference>
<dbReference type="RefSeq" id="XP_005265244.1">
    <property type="nucleotide sequence ID" value="XM_005265187.3"/>
</dbReference>
<dbReference type="RefSeq" id="XP_047304178.1">
    <molecule id="Q9NR81-2"/>
    <property type="nucleotide sequence ID" value="XM_047448222.1"/>
</dbReference>
<dbReference type="RefSeq" id="XP_047304179.1">
    <molecule id="Q9NR81-2"/>
    <property type="nucleotide sequence ID" value="XM_047448223.1"/>
</dbReference>
<dbReference type="RefSeq" id="XP_047304180.1">
    <molecule id="Q9NR81-2"/>
    <property type="nucleotide sequence ID" value="XM_047448224.1"/>
</dbReference>
<dbReference type="SMR" id="Q9NR81"/>
<dbReference type="BioGRID" id="119115">
    <property type="interactions" value="16"/>
</dbReference>
<dbReference type="FunCoup" id="Q9NR81">
    <property type="interactions" value="1151"/>
</dbReference>
<dbReference type="IntAct" id="Q9NR81">
    <property type="interactions" value="11"/>
</dbReference>
<dbReference type="MINT" id="Q9NR81"/>
<dbReference type="STRING" id="9606.ENSP00000341071"/>
<dbReference type="GlyGen" id="Q9NR81">
    <property type="glycosylation" value="1 site, 1 O-linked glycan (1 site)"/>
</dbReference>
<dbReference type="iPTMnet" id="Q9NR81"/>
<dbReference type="PhosphoSitePlus" id="Q9NR81"/>
<dbReference type="BioMuta" id="ARHGEF3"/>
<dbReference type="DMDM" id="52782760"/>
<dbReference type="jPOST" id="Q9NR81"/>
<dbReference type="MassIVE" id="Q9NR81"/>
<dbReference type="PaxDb" id="9606-ENSP00000341071"/>
<dbReference type="PeptideAtlas" id="Q9NR81"/>
<dbReference type="ProteomicsDB" id="82296">
    <molecule id="Q9NR81-1"/>
</dbReference>
<dbReference type="ProteomicsDB" id="82297">
    <molecule id="Q9NR81-2"/>
</dbReference>
<dbReference type="ProteomicsDB" id="82298">
    <molecule id="Q9NR81-3"/>
</dbReference>
<dbReference type="ProteomicsDB" id="82299">
    <molecule id="Q9NR81-4"/>
</dbReference>
<dbReference type="Antibodypedia" id="31503">
    <property type="antibodies" value="188 antibodies from 24 providers"/>
</dbReference>
<dbReference type="DNASU" id="50650"/>
<dbReference type="Ensembl" id="ENST00000296315.8">
    <molecule id="Q9NR81-1"/>
    <property type="protein sequence ID" value="ENSP00000296315.3"/>
    <property type="gene ID" value="ENSG00000163947.12"/>
</dbReference>
<dbReference type="Ensembl" id="ENST00000338458.8">
    <molecule id="Q9NR81-2"/>
    <property type="protein sequence ID" value="ENSP00000341071.4"/>
    <property type="gene ID" value="ENSG00000163947.12"/>
</dbReference>
<dbReference type="Ensembl" id="ENST00000413728.6">
    <molecule id="Q9NR81-3"/>
    <property type="protein sequence ID" value="ENSP00000410922.2"/>
    <property type="gene ID" value="ENSG00000163947.12"/>
</dbReference>
<dbReference type="GeneID" id="50650"/>
<dbReference type="KEGG" id="hsa:50650"/>
<dbReference type="MANE-Select" id="ENST00000296315.8">
    <property type="protein sequence ID" value="ENSP00000296315.3"/>
    <property type="RefSeq nucleotide sequence ID" value="NM_019555.3"/>
    <property type="RefSeq protein sequence ID" value="NP_062455.1"/>
</dbReference>
<dbReference type="UCSC" id="uc003dif.3">
    <molecule id="Q9NR81-1"/>
    <property type="organism name" value="human"/>
</dbReference>
<dbReference type="AGR" id="HGNC:683"/>
<dbReference type="CTD" id="50650"/>
<dbReference type="DisGeNET" id="50650"/>
<dbReference type="GeneCards" id="ARHGEF3"/>
<dbReference type="HGNC" id="HGNC:683">
    <property type="gene designation" value="ARHGEF3"/>
</dbReference>
<dbReference type="HPA" id="ENSG00000163947">
    <property type="expression patterns" value="Low tissue specificity"/>
</dbReference>
<dbReference type="MIM" id="612115">
    <property type="type" value="gene"/>
</dbReference>
<dbReference type="neXtProt" id="NX_Q9NR81"/>
<dbReference type="OpenTargets" id="ENSG00000163947"/>
<dbReference type="PharmGKB" id="PA24973"/>
<dbReference type="VEuPathDB" id="HostDB:ENSG00000163947"/>
<dbReference type="eggNOG" id="KOG4305">
    <property type="taxonomic scope" value="Eukaryota"/>
</dbReference>
<dbReference type="GeneTree" id="ENSGT00940000158385"/>
<dbReference type="InParanoid" id="Q9NR81"/>
<dbReference type="OMA" id="QCVFREM"/>
<dbReference type="OrthoDB" id="1716625at2759"/>
<dbReference type="PAN-GO" id="Q9NR81">
    <property type="GO annotations" value="1 GO annotation based on evolutionary models"/>
</dbReference>
<dbReference type="PhylomeDB" id="Q9NR81"/>
<dbReference type="TreeFam" id="TF328974"/>
<dbReference type="PathwayCommons" id="Q9NR81"/>
<dbReference type="Reactome" id="R-HSA-193648">
    <property type="pathway name" value="NRAGE signals death through JNK"/>
</dbReference>
<dbReference type="Reactome" id="R-HSA-416482">
    <property type="pathway name" value="G alpha (12/13) signalling events"/>
</dbReference>
<dbReference type="Reactome" id="R-HSA-8980692">
    <property type="pathway name" value="RHOA GTPase cycle"/>
</dbReference>
<dbReference type="Reactome" id="R-HSA-9013026">
    <property type="pathway name" value="RHOB GTPase cycle"/>
</dbReference>
<dbReference type="SignaLink" id="Q9NR81"/>
<dbReference type="SIGNOR" id="Q9NR81"/>
<dbReference type="BioGRID-ORCS" id="50650">
    <property type="hits" value="18 hits in 1153 CRISPR screens"/>
</dbReference>
<dbReference type="ChiTaRS" id="ARHGEF3">
    <property type="organism name" value="human"/>
</dbReference>
<dbReference type="GeneWiki" id="ARHGEF3"/>
<dbReference type="GenomeRNAi" id="50650"/>
<dbReference type="Pharos" id="Q9NR81">
    <property type="development level" value="Tbio"/>
</dbReference>
<dbReference type="PRO" id="PR:Q9NR81"/>
<dbReference type="Proteomes" id="UP000005640">
    <property type="component" value="Chromosome 3"/>
</dbReference>
<dbReference type="RNAct" id="Q9NR81">
    <property type="molecule type" value="protein"/>
</dbReference>
<dbReference type="Bgee" id="ENSG00000163947">
    <property type="expression patterns" value="Expressed in renal glomerulus and 194 other cell types or tissues"/>
</dbReference>
<dbReference type="ExpressionAtlas" id="Q9NR81">
    <property type="expression patterns" value="baseline and differential"/>
</dbReference>
<dbReference type="GO" id="GO:0005829">
    <property type="term" value="C:cytosol"/>
    <property type="evidence" value="ECO:0000304"/>
    <property type="project" value="Reactome"/>
</dbReference>
<dbReference type="GO" id="GO:0005085">
    <property type="term" value="F:guanyl-nucleotide exchange factor activity"/>
    <property type="evidence" value="ECO:0000304"/>
    <property type="project" value="Reactome"/>
</dbReference>
<dbReference type="GO" id="GO:0035025">
    <property type="term" value="P:positive regulation of Rho protein signal transduction"/>
    <property type="evidence" value="ECO:0000318"/>
    <property type="project" value="GO_Central"/>
</dbReference>
<dbReference type="GO" id="GO:0051056">
    <property type="term" value="P:regulation of small GTPase mediated signal transduction"/>
    <property type="evidence" value="ECO:0000304"/>
    <property type="project" value="Reactome"/>
</dbReference>
<dbReference type="GO" id="GO:0007266">
    <property type="term" value="P:Rho protein signal transduction"/>
    <property type="evidence" value="ECO:0000304"/>
    <property type="project" value="ProtInc"/>
</dbReference>
<dbReference type="CDD" id="cd10572">
    <property type="entry name" value="PH_RhoGEF3_XPLN"/>
    <property type="match status" value="1"/>
</dbReference>
<dbReference type="CDD" id="cd00160">
    <property type="entry name" value="RhoGEF"/>
    <property type="match status" value="1"/>
</dbReference>
<dbReference type="FunFam" id="2.30.29.30:FF:000151">
    <property type="entry name" value="Rho guanine nucleotide exchange factor 3"/>
    <property type="match status" value="1"/>
</dbReference>
<dbReference type="FunFam" id="1.20.900.10:FF:000010">
    <property type="entry name" value="Rho guanine nucleotide exchange factor 3 isoform 1"/>
    <property type="match status" value="1"/>
</dbReference>
<dbReference type="Gene3D" id="1.20.900.10">
    <property type="entry name" value="Dbl homology (DH) domain"/>
    <property type="match status" value="1"/>
</dbReference>
<dbReference type="Gene3D" id="2.30.29.30">
    <property type="entry name" value="Pleckstrin-homology domain (PH domain)/Phosphotyrosine-binding domain (PTB)"/>
    <property type="match status" value="1"/>
</dbReference>
<dbReference type="InterPro" id="IPR035899">
    <property type="entry name" value="DBL_dom_sf"/>
</dbReference>
<dbReference type="InterPro" id="IPR000219">
    <property type="entry name" value="DH_dom"/>
</dbReference>
<dbReference type="InterPro" id="IPR051480">
    <property type="entry name" value="Endocytic_GEF_Adapter"/>
</dbReference>
<dbReference type="InterPro" id="IPR001331">
    <property type="entry name" value="GDS_CDC24_CS"/>
</dbReference>
<dbReference type="InterPro" id="IPR011993">
    <property type="entry name" value="PH-like_dom_sf"/>
</dbReference>
<dbReference type="InterPro" id="IPR001849">
    <property type="entry name" value="PH_domain"/>
</dbReference>
<dbReference type="InterPro" id="IPR044129">
    <property type="entry name" value="PH_RhoGEF3_XPLN"/>
</dbReference>
<dbReference type="InterPro" id="IPR055251">
    <property type="entry name" value="SOS1_NGEF_PH"/>
</dbReference>
<dbReference type="PANTHER" id="PTHR46006:SF2">
    <property type="entry name" value="RHO GUANINE NUCLEOTIDE EXCHANGE FACTOR 3"/>
    <property type="match status" value="1"/>
</dbReference>
<dbReference type="PANTHER" id="PTHR46006">
    <property type="entry name" value="RHO GUANINE NUCLEOTIDE EXCHANGE FACTOR AT 64C, ISOFORM A"/>
    <property type="match status" value="1"/>
</dbReference>
<dbReference type="Pfam" id="PF00621">
    <property type="entry name" value="RhoGEF"/>
    <property type="match status" value="1"/>
</dbReference>
<dbReference type="Pfam" id="PF22697">
    <property type="entry name" value="SOS1_NGEF_PH"/>
    <property type="match status" value="1"/>
</dbReference>
<dbReference type="SMART" id="SM00233">
    <property type="entry name" value="PH"/>
    <property type="match status" value="1"/>
</dbReference>
<dbReference type="SMART" id="SM00325">
    <property type="entry name" value="RhoGEF"/>
    <property type="match status" value="1"/>
</dbReference>
<dbReference type="SUPFAM" id="SSF48065">
    <property type="entry name" value="DBL homology domain (DH-domain)"/>
    <property type="match status" value="1"/>
</dbReference>
<dbReference type="SUPFAM" id="SSF50729">
    <property type="entry name" value="PH domain-like"/>
    <property type="match status" value="1"/>
</dbReference>
<dbReference type="PROSITE" id="PS00741">
    <property type="entry name" value="DH_1"/>
    <property type="match status" value="1"/>
</dbReference>
<dbReference type="PROSITE" id="PS50010">
    <property type="entry name" value="DH_2"/>
    <property type="match status" value="1"/>
</dbReference>
<dbReference type="PROSITE" id="PS50003">
    <property type="entry name" value="PH_DOMAIN"/>
    <property type="match status" value="1"/>
</dbReference>
<proteinExistence type="evidence at protein level"/>
<keyword id="KW-0025">Alternative splicing</keyword>
<keyword id="KW-0963">Cytoplasm</keyword>
<keyword id="KW-0344">Guanine-nucleotide releasing factor</keyword>
<keyword id="KW-0597">Phosphoprotein</keyword>
<keyword id="KW-1267">Proteomics identification</keyword>
<keyword id="KW-1185">Reference proteome</keyword>
<organism>
    <name type="scientific">Homo sapiens</name>
    <name type="common">Human</name>
    <dbReference type="NCBI Taxonomy" id="9606"/>
    <lineage>
        <taxon>Eukaryota</taxon>
        <taxon>Metazoa</taxon>
        <taxon>Chordata</taxon>
        <taxon>Craniata</taxon>
        <taxon>Vertebrata</taxon>
        <taxon>Euteleostomi</taxon>
        <taxon>Mammalia</taxon>
        <taxon>Eutheria</taxon>
        <taxon>Euarchontoglires</taxon>
        <taxon>Primates</taxon>
        <taxon>Haplorrhini</taxon>
        <taxon>Catarrhini</taxon>
        <taxon>Hominidae</taxon>
        <taxon>Homo</taxon>
    </lineage>
</organism>
<reference key="1">
    <citation type="journal article" date="2000" name="Biochem. Biophys. Res. Commun.">
        <title>Isolation of two novel human RhoGEFs, ARHGEF3 and ARHGEF4, in 3p13-21 and 2q22.</title>
        <authorList>
            <person name="Thiesen S."/>
            <person name="Kuebart S."/>
            <person name="Ropers H.-H."/>
            <person name="Nothwang H.G."/>
        </authorList>
    </citation>
    <scope>NUCLEOTIDE SEQUENCE [MRNA] (ISOFORM 1)</scope>
    <scope>TISSUE SPECIFICITY</scope>
</reference>
<reference key="2">
    <citation type="journal article" date="2001" name="Genome Res.">
        <title>Towards a catalog of human genes and proteins: sequencing and analysis of 500 novel complete protein coding human cDNAs.</title>
        <authorList>
            <person name="Wiemann S."/>
            <person name="Weil B."/>
            <person name="Wellenreuther R."/>
            <person name="Gassenhuber J."/>
            <person name="Glassl S."/>
            <person name="Ansorge W."/>
            <person name="Boecher M."/>
            <person name="Bloecker H."/>
            <person name="Bauersachs S."/>
            <person name="Blum H."/>
            <person name="Lauber J."/>
            <person name="Duesterhoeft A."/>
            <person name="Beyer A."/>
            <person name="Koehrer K."/>
            <person name="Strack N."/>
            <person name="Mewes H.-W."/>
            <person name="Ottenwaelder B."/>
            <person name="Obermaier B."/>
            <person name="Tampe J."/>
            <person name="Heubner D."/>
            <person name="Wambutt R."/>
            <person name="Korn B."/>
            <person name="Klein M."/>
            <person name="Poustka A."/>
        </authorList>
    </citation>
    <scope>NUCLEOTIDE SEQUENCE [LARGE SCALE MRNA] (ISOFORM 1)</scope>
    <source>
        <tissue>Testis</tissue>
    </source>
</reference>
<reference key="3">
    <citation type="submission" date="2001-10" db="EMBL/GenBank/DDBJ databases">
        <authorList>
            <person name="Guo J.H."/>
            <person name="Yu L."/>
        </authorList>
    </citation>
    <scope>NUCLEOTIDE SEQUENCE [LARGE SCALE MRNA] (ISOFORM 2)</scope>
    <scope>VARIANT VAL-335</scope>
</reference>
<reference key="4">
    <citation type="journal article" date="2004" name="Nat. Genet.">
        <title>Complete sequencing and characterization of 21,243 full-length human cDNAs.</title>
        <authorList>
            <person name="Ota T."/>
            <person name="Suzuki Y."/>
            <person name="Nishikawa T."/>
            <person name="Otsuki T."/>
            <person name="Sugiyama T."/>
            <person name="Irie R."/>
            <person name="Wakamatsu A."/>
            <person name="Hayashi K."/>
            <person name="Sato H."/>
            <person name="Nagai K."/>
            <person name="Kimura K."/>
            <person name="Makita H."/>
            <person name="Sekine M."/>
            <person name="Obayashi M."/>
            <person name="Nishi T."/>
            <person name="Shibahara T."/>
            <person name="Tanaka T."/>
            <person name="Ishii S."/>
            <person name="Yamamoto J."/>
            <person name="Saito K."/>
            <person name="Kawai Y."/>
            <person name="Isono Y."/>
            <person name="Nakamura Y."/>
            <person name="Nagahari K."/>
            <person name="Murakami K."/>
            <person name="Yasuda T."/>
            <person name="Iwayanagi T."/>
            <person name="Wagatsuma M."/>
            <person name="Shiratori A."/>
            <person name="Sudo H."/>
            <person name="Hosoiri T."/>
            <person name="Kaku Y."/>
            <person name="Kodaira H."/>
            <person name="Kondo H."/>
            <person name="Sugawara M."/>
            <person name="Takahashi M."/>
            <person name="Kanda K."/>
            <person name="Yokoi T."/>
            <person name="Furuya T."/>
            <person name="Kikkawa E."/>
            <person name="Omura Y."/>
            <person name="Abe K."/>
            <person name="Kamihara K."/>
            <person name="Katsuta N."/>
            <person name="Sato K."/>
            <person name="Tanikawa M."/>
            <person name="Yamazaki M."/>
            <person name="Ninomiya K."/>
            <person name="Ishibashi T."/>
            <person name="Yamashita H."/>
            <person name="Murakawa K."/>
            <person name="Fujimori K."/>
            <person name="Tanai H."/>
            <person name="Kimata M."/>
            <person name="Watanabe M."/>
            <person name="Hiraoka S."/>
            <person name="Chiba Y."/>
            <person name="Ishida S."/>
            <person name="Ono Y."/>
            <person name="Takiguchi S."/>
            <person name="Watanabe S."/>
            <person name="Yosida M."/>
            <person name="Hotuta T."/>
            <person name="Kusano J."/>
            <person name="Kanehori K."/>
            <person name="Takahashi-Fujii A."/>
            <person name="Hara H."/>
            <person name="Tanase T.-O."/>
            <person name="Nomura Y."/>
            <person name="Togiya S."/>
            <person name="Komai F."/>
            <person name="Hara R."/>
            <person name="Takeuchi K."/>
            <person name="Arita M."/>
            <person name="Imose N."/>
            <person name="Musashino K."/>
            <person name="Yuuki H."/>
            <person name="Oshima A."/>
            <person name="Sasaki N."/>
            <person name="Aotsuka S."/>
            <person name="Yoshikawa Y."/>
            <person name="Matsunawa H."/>
            <person name="Ichihara T."/>
            <person name="Shiohata N."/>
            <person name="Sano S."/>
            <person name="Moriya S."/>
            <person name="Momiyama H."/>
            <person name="Satoh N."/>
            <person name="Takami S."/>
            <person name="Terashima Y."/>
            <person name="Suzuki O."/>
            <person name="Nakagawa S."/>
            <person name="Senoh A."/>
            <person name="Mizoguchi H."/>
            <person name="Goto Y."/>
            <person name="Shimizu F."/>
            <person name="Wakebe H."/>
            <person name="Hishigaki H."/>
            <person name="Watanabe T."/>
            <person name="Sugiyama A."/>
            <person name="Takemoto M."/>
            <person name="Kawakami B."/>
            <person name="Yamazaki M."/>
            <person name="Watanabe K."/>
            <person name="Kumagai A."/>
            <person name="Itakura S."/>
            <person name="Fukuzumi Y."/>
            <person name="Fujimori Y."/>
            <person name="Komiyama M."/>
            <person name="Tashiro H."/>
            <person name="Tanigami A."/>
            <person name="Fujiwara T."/>
            <person name="Ono T."/>
            <person name="Yamada K."/>
            <person name="Fujii Y."/>
            <person name="Ozaki K."/>
            <person name="Hirao M."/>
            <person name="Ohmori Y."/>
            <person name="Kawabata A."/>
            <person name="Hikiji T."/>
            <person name="Kobatake N."/>
            <person name="Inagaki H."/>
            <person name="Ikema Y."/>
            <person name="Okamoto S."/>
            <person name="Okitani R."/>
            <person name="Kawakami T."/>
            <person name="Noguchi S."/>
            <person name="Itoh T."/>
            <person name="Shigeta K."/>
            <person name="Senba T."/>
            <person name="Matsumura K."/>
            <person name="Nakajima Y."/>
            <person name="Mizuno T."/>
            <person name="Morinaga M."/>
            <person name="Sasaki M."/>
            <person name="Togashi T."/>
            <person name="Oyama M."/>
            <person name="Hata H."/>
            <person name="Watanabe M."/>
            <person name="Komatsu T."/>
            <person name="Mizushima-Sugano J."/>
            <person name="Satoh T."/>
            <person name="Shirai Y."/>
            <person name="Takahashi Y."/>
            <person name="Nakagawa K."/>
            <person name="Okumura K."/>
            <person name="Nagase T."/>
            <person name="Nomura N."/>
            <person name="Kikuchi H."/>
            <person name="Masuho Y."/>
            <person name="Yamashita R."/>
            <person name="Nakai K."/>
            <person name="Yada T."/>
            <person name="Nakamura Y."/>
            <person name="Ohara O."/>
            <person name="Isogai T."/>
            <person name="Sugano S."/>
        </authorList>
    </citation>
    <scope>NUCLEOTIDE SEQUENCE [LARGE SCALE MRNA] (ISOFORM 1)</scope>
    <scope>NUCLEOTIDE SEQUENCE [LARGE SCALE MRNA] OF 71-526 (ISOFORMS 1/2/3)</scope>
    <scope>VARIANT VAL-335</scope>
    <source>
        <tissue>Brain</tissue>
        <tissue>Placenta</tissue>
    </source>
</reference>
<reference key="5">
    <citation type="submission" date="2005-03" db="EMBL/GenBank/DDBJ databases">
        <authorList>
            <person name="Totoki Y."/>
            <person name="Toyoda A."/>
            <person name="Takeda T."/>
            <person name="Sakaki Y."/>
            <person name="Tanaka A."/>
            <person name="Yokoyama S."/>
            <person name="Ohara O."/>
            <person name="Nagase T."/>
            <person name="Kikuno R.F."/>
        </authorList>
    </citation>
    <scope>NUCLEOTIDE SEQUENCE [LARGE SCALE MRNA] (ISOFORM 3)</scope>
    <source>
        <tissue>Brain</tissue>
    </source>
</reference>
<reference key="6">
    <citation type="submission" date="2005-07" db="EMBL/GenBank/DDBJ databases">
        <authorList>
            <person name="Mural R.J."/>
            <person name="Istrail S."/>
            <person name="Sutton G.G."/>
            <person name="Florea L."/>
            <person name="Halpern A.L."/>
            <person name="Mobarry C.M."/>
            <person name="Lippert R."/>
            <person name="Walenz B."/>
            <person name="Shatkay H."/>
            <person name="Dew I."/>
            <person name="Miller J.R."/>
            <person name="Flanigan M.J."/>
            <person name="Edwards N.J."/>
            <person name="Bolanos R."/>
            <person name="Fasulo D."/>
            <person name="Halldorsson B.V."/>
            <person name="Hannenhalli S."/>
            <person name="Turner R."/>
            <person name="Yooseph S."/>
            <person name="Lu F."/>
            <person name="Nusskern D.R."/>
            <person name="Shue B.C."/>
            <person name="Zheng X.H."/>
            <person name="Zhong F."/>
            <person name="Delcher A.L."/>
            <person name="Huson D.H."/>
            <person name="Kravitz S.A."/>
            <person name="Mouchard L."/>
            <person name="Reinert K."/>
            <person name="Remington K.A."/>
            <person name="Clark A.G."/>
            <person name="Waterman M.S."/>
            <person name="Eichler E.E."/>
            <person name="Adams M.D."/>
            <person name="Hunkapiller M.W."/>
            <person name="Myers E.W."/>
            <person name="Venter J.C."/>
        </authorList>
    </citation>
    <scope>NUCLEOTIDE SEQUENCE [LARGE SCALE GENOMIC DNA]</scope>
    <scope>VARIANT VAL-335</scope>
</reference>
<reference key="7">
    <citation type="journal article" date="2004" name="Genome Res.">
        <title>The status, quality, and expansion of the NIH full-length cDNA project: the Mammalian Gene Collection (MGC).</title>
        <authorList>
            <consortium name="The MGC Project Team"/>
        </authorList>
    </citation>
    <scope>NUCLEOTIDE SEQUENCE [LARGE SCALE MRNA] (ISOFORMS 1 AND 4)</scope>
    <scope>VARIANT VAL-335</scope>
    <source>
        <tissue>Hippocampus</tissue>
        <tissue>Uterus</tissue>
    </source>
</reference>
<reference key="8">
    <citation type="journal article" date="2002" name="J. Biol. Chem.">
        <title>XPLN, a guanine nucleotide exchange factor for RhoA and RhoB, but not RhoC.</title>
        <authorList>
            <person name="Arthur W.T."/>
            <person name="Ellerbroek S.M."/>
            <person name="Der C.J."/>
            <person name="Burridge K."/>
            <person name="Wennerberg K."/>
        </authorList>
    </citation>
    <scope>FUNCTION</scope>
    <scope>TISSUE SPECIFICITY</scope>
</reference>
<reference key="9">
    <citation type="journal article" date="2013" name="J. Proteome Res.">
        <title>Toward a comprehensive characterization of a human cancer cell phosphoproteome.</title>
        <authorList>
            <person name="Zhou H."/>
            <person name="Di Palma S."/>
            <person name="Preisinger C."/>
            <person name="Peng M."/>
            <person name="Polat A.N."/>
            <person name="Heck A.J."/>
            <person name="Mohammed S."/>
        </authorList>
    </citation>
    <scope>PHOSPHORYLATION [LARGE SCALE ANALYSIS] AT SER-47</scope>
    <scope>IDENTIFICATION BY MASS SPECTROMETRY [LARGE SCALE ANALYSIS]</scope>
    <source>
        <tissue>Cervix carcinoma</tissue>
    </source>
</reference>
<accession>Q9NR81</accession>
<accession>A8K5U7</accession>
<accession>Q4FZB6</accession>
<accession>Q4QQI5</accession>
<accession>Q4QQQ0</accession>
<accession>Q59F00</accession>
<accession>Q6NUN3</accession>
<accession>Q7Z4U2</accession>
<accession>Q7Z5T2</accession>
<accession>Q9H7T4</accession>
<name>ARHG3_HUMAN</name>
<evidence type="ECO:0000250" key="1"/>
<evidence type="ECO:0000250" key="2">
    <source>
        <dbReference type="UniProtKB" id="Q7Z628"/>
    </source>
</evidence>
<evidence type="ECO:0000255" key="3">
    <source>
        <dbReference type="PROSITE-ProRule" id="PRU00062"/>
    </source>
</evidence>
<evidence type="ECO:0000255" key="4">
    <source>
        <dbReference type="PROSITE-ProRule" id="PRU00145"/>
    </source>
</evidence>
<evidence type="ECO:0000256" key="5">
    <source>
        <dbReference type="SAM" id="MobiDB-lite"/>
    </source>
</evidence>
<evidence type="ECO:0000269" key="6">
    <source>
    </source>
</evidence>
<evidence type="ECO:0000269" key="7">
    <source>
    </source>
</evidence>
<evidence type="ECO:0000269" key="8">
    <source>
    </source>
</evidence>
<evidence type="ECO:0000269" key="9">
    <source>
    </source>
</evidence>
<evidence type="ECO:0000269" key="10">
    <source ref="3"/>
</evidence>
<evidence type="ECO:0000269" key="11">
    <source ref="6"/>
</evidence>
<evidence type="ECO:0000303" key="12">
    <source>
    </source>
</evidence>
<evidence type="ECO:0000303" key="13">
    <source ref="3"/>
</evidence>
<evidence type="ECO:0000303" key="14">
    <source ref="5"/>
</evidence>
<evidence type="ECO:0000305" key="15"/>
<evidence type="ECO:0007744" key="16">
    <source>
    </source>
</evidence>
<protein>
    <recommendedName>
        <fullName>Rho guanine nucleotide exchange factor 3</fullName>
    </recommendedName>
    <alternativeName>
        <fullName>Exchange factor found in platelets and leukemic and neuronal tissues</fullName>
        <shortName>XPLN</shortName>
    </alternativeName>
</protein>
<feature type="chain" id="PRO_0000080911" description="Rho guanine nucleotide exchange factor 3">
    <location>
        <begin position="1"/>
        <end position="526"/>
    </location>
</feature>
<feature type="domain" description="DH" evidence="3">
    <location>
        <begin position="122"/>
        <end position="304"/>
    </location>
</feature>
<feature type="domain" description="PH" evidence="4">
    <location>
        <begin position="291"/>
        <end position="449"/>
    </location>
</feature>
<feature type="region of interest" description="Disordered" evidence="5">
    <location>
        <begin position="20"/>
        <end position="40"/>
    </location>
</feature>
<feature type="region of interest" description="Disordered" evidence="5">
    <location>
        <begin position="464"/>
        <end position="526"/>
    </location>
</feature>
<feature type="compositionally biased region" description="Polar residues" evidence="5">
    <location>
        <begin position="466"/>
        <end position="475"/>
    </location>
</feature>
<feature type="modified residue" description="Phosphoserine" evidence="16">
    <location>
        <position position="47"/>
    </location>
</feature>
<feature type="modified residue" description="Phosphoserine" evidence="2">
    <location>
        <position position="70"/>
    </location>
</feature>
<feature type="splice variant" id="VSP_027204" description="In isoform 4." evidence="12">
    <location>
        <begin position="1"/>
        <end position="202"/>
    </location>
</feature>
<feature type="splice variant" id="VSP_011612" description="In isoform 2." evidence="13">
    <original>MVAKDYPFYLTVKRANCSLELPPASGPAKDAE</original>
    <variation>MDSSTAMNQCSCRGMEENKERPKRQRQNNFPMFPSPKAWNFRGRKRKQSTQDEDAVSLCSLDIS</variation>
    <location>
        <begin position="1"/>
        <end position="32"/>
    </location>
</feature>
<feature type="splice variant" id="VSP_027205" description="In isoform 3." evidence="14">
    <original>MVAKDYPFYLTVKRANCSLELPPASGPAKDAE</original>
    <variation>MIEVCHHNWLLWLCPSKFGIFMCCLASTTGQMELRRTR</variation>
    <location>
        <begin position="1"/>
        <end position="32"/>
    </location>
</feature>
<feature type="splice variant" id="VSP_027206" description="In isoform 4." evidence="12">
    <original>GW</original>
    <variation>MK</variation>
    <location>
        <begin position="203"/>
        <end position="204"/>
    </location>
</feature>
<feature type="sequence variant" id="VAR_021935" description="In dbSNP:rs3732507.">
    <original>K</original>
    <variation>R</variation>
    <location>
        <position position="13"/>
    </location>
</feature>
<feature type="sequence variant" id="VAR_021936" description="In dbSNP:rs3772219." evidence="8 9 10 11">
    <original>L</original>
    <variation>V</variation>
    <location>
        <position position="335"/>
    </location>
</feature>
<feature type="sequence conflict" description="In Ref. 3; AAP97313." evidence="15" ref="3">
    <original>I</original>
    <variation>T</variation>
    <location>
        <position position="410"/>
    </location>
</feature>